<reference key="1">
    <citation type="journal article" date="2001" name="Genome Res.">
        <title>The complete genome sequence of the lactic acid bacterium Lactococcus lactis ssp. lactis IL1403.</title>
        <authorList>
            <person name="Bolotin A."/>
            <person name="Wincker P."/>
            <person name="Mauger S."/>
            <person name="Jaillon O."/>
            <person name="Malarme K."/>
            <person name="Weissenbach J."/>
            <person name="Ehrlich S.D."/>
            <person name="Sorokin A."/>
        </authorList>
    </citation>
    <scope>NUCLEOTIDE SEQUENCE [LARGE SCALE GENOMIC DNA]</scope>
    <source>
        <strain>IL1403</strain>
    </source>
</reference>
<evidence type="ECO:0000250" key="1"/>
<evidence type="ECO:0000256" key="2">
    <source>
        <dbReference type="SAM" id="MobiDB-lite"/>
    </source>
</evidence>
<evidence type="ECO:0000305" key="3"/>
<proteinExistence type="inferred from homology"/>
<feature type="chain" id="PRO_0000105168" description="Glutamyl-tRNA(Gln) amidotransferase subunit A">
    <location>
        <begin position="1"/>
        <end position="486"/>
    </location>
</feature>
<feature type="region of interest" description="Disordered" evidence="2">
    <location>
        <begin position="130"/>
        <end position="158"/>
    </location>
</feature>
<feature type="compositionally biased region" description="Polar residues" evidence="2">
    <location>
        <begin position="132"/>
        <end position="144"/>
    </location>
</feature>
<feature type="active site" description="Charge relay system" evidence="1">
    <location>
        <position position="77"/>
    </location>
</feature>
<feature type="active site" description="Charge relay system" evidence="1">
    <location>
        <position position="152"/>
    </location>
</feature>
<feature type="active site" description="Acyl-ester intermediate" evidence="1">
    <location>
        <position position="176"/>
    </location>
</feature>
<protein>
    <recommendedName>
        <fullName>Glutamyl-tRNA(Gln) amidotransferase subunit A</fullName>
        <shortName>Glu-ADT subunit A</shortName>
        <ecNumber>6.3.5.7</ecNumber>
    </recommendedName>
</protein>
<gene>
    <name type="primary">gatA</name>
    <name type="ordered locus">LL0163</name>
    <name type="ORF">L0473</name>
</gene>
<comment type="function">
    <text evidence="1">Allows the formation of correctly charged Gln-tRNA(Gln) through the transamidation of misacylated Glu-tRNA(Gln) in organisms which lack glutaminyl-tRNA synthetase. The reaction takes place in the presence of glutamine and ATP through an activated gamma-phospho-Glu-tRNA(Gln) (By similarity).</text>
</comment>
<comment type="catalytic activity">
    <reaction>
        <text>L-glutamyl-tRNA(Gln) + L-glutamine + ATP + H2O = L-glutaminyl-tRNA(Gln) + L-glutamate + ADP + phosphate + H(+)</text>
        <dbReference type="Rhea" id="RHEA:17521"/>
        <dbReference type="Rhea" id="RHEA-COMP:9681"/>
        <dbReference type="Rhea" id="RHEA-COMP:9684"/>
        <dbReference type="ChEBI" id="CHEBI:15377"/>
        <dbReference type="ChEBI" id="CHEBI:15378"/>
        <dbReference type="ChEBI" id="CHEBI:29985"/>
        <dbReference type="ChEBI" id="CHEBI:30616"/>
        <dbReference type="ChEBI" id="CHEBI:43474"/>
        <dbReference type="ChEBI" id="CHEBI:58359"/>
        <dbReference type="ChEBI" id="CHEBI:78520"/>
        <dbReference type="ChEBI" id="CHEBI:78521"/>
        <dbReference type="ChEBI" id="CHEBI:456216"/>
        <dbReference type="EC" id="6.3.5.7"/>
    </reaction>
</comment>
<comment type="subunit">
    <text evidence="1">Heterotrimer of A, B and C subunits.</text>
</comment>
<comment type="similarity">
    <text evidence="3">Belongs to the amidase family. GatA subfamily.</text>
</comment>
<organism>
    <name type="scientific">Lactococcus lactis subsp. lactis (strain IL1403)</name>
    <name type="common">Streptococcus lactis</name>
    <dbReference type="NCBI Taxonomy" id="272623"/>
    <lineage>
        <taxon>Bacteria</taxon>
        <taxon>Bacillati</taxon>
        <taxon>Bacillota</taxon>
        <taxon>Bacilli</taxon>
        <taxon>Lactobacillales</taxon>
        <taxon>Streptococcaceae</taxon>
        <taxon>Lactococcus</taxon>
    </lineage>
</organism>
<accession>Q9CJ43</accession>
<dbReference type="EC" id="6.3.5.7"/>
<dbReference type="EMBL" id="AE005176">
    <property type="protein sequence ID" value="AAK04261.1"/>
    <property type="molecule type" value="Genomic_DNA"/>
</dbReference>
<dbReference type="PIR" id="C86645">
    <property type="entry name" value="C86645"/>
</dbReference>
<dbReference type="RefSeq" id="NP_266319.1">
    <property type="nucleotide sequence ID" value="NC_002662.1"/>
</dbReference>
<dbReference type="RefSeq" id="WP_010905164.1">
    <property type="nucleotide sequence ID" value="NC_002662.1"/>
</dbReference>
<dbReference type="SMR" id="Q9CJ43"/>
<dbReference type="PaxDb" id="272623-L0473"/>
<dbReference type="EnsemblBacteria" id="AAK04261">
    <property type="protein sequence ID" value="AAK04261"/>
    <property type="gene ID" value="L0473"/>
</dbReference>
<dbReference type="KEGG" id="lla:L0473"/>
<dbReference type="PATRIC" id="fig|272623.7.peg.181"/>
<dbReference type="eggNOG" id="COG0154">
    <property type="taxonomic scope" value="Bacteria"/>
</dbReference>
<dbReference type="HOGENOM" id="CLU_009600_0_3_9"/>
<dbReference type="OrthoDB" id="9811471at2"/>
<dbReference type="Proteomes" id="UP000002196">
    <property type="component" value="Chromosome"/>
</dbReference>
<dbReference type="GO" id="GO:0030956">
    <property type="term" value="C:glutamyl-tRNA(Gln) amidotransferase complex"/>
    <property type="evidence" value="ECO:0007669"/>
    <property type="project" value="InterPro"/>
</dbReference>
<dbReference type="GO" id="GO:0005524">
    <property type="term" value="F:ATP binding"/>
    <property type="evidence" value="ECO:0007669"/>
    <property type="project" value="UniProtKB-KW"/>
</dbReference>
<dbReference type="GO" id="GO:0050567">
    <property type="term" value="F:glutaminyl-tRNA synthase (glutamine-hydrolyzing) activity"/>
    <property type="evidence" value="ECO:0007669"/>
    <property type="project" value="UniProtKB-UniRule"/>
</dbReference>
<dbReference type="GO" id="GO:0006412">
    <property type="term" value="P:translation"/>
    <property type="evidence" value="ECO:0007669"/>
    <property type="project" value="UniProtKB-UniRule"/>
</dbReference>
<dbReference type="Gene3D" id="3.90.1300.10">
    <property type="entry name" value="Amidase signature (AS) domain"/>
    <property type="match status" value="1"/>
</dbReference>
<dbReference type="HAMAP" id="MF_00120">
    <property type="entry name" value="GatA"/>
    <property type="match status" value="1"/>
</dbReference>
<dbReference type="InterPro" id="IPR000120">
    <property type="entry name" value="Amidase"/>
</dbReference>
<dbReference type="InterPro" id="IPR020556">
    <property type="entry name" value="Amidase_CS"/>
</dbReference>
<dbReference type="InterPro" id="IPR023631">
    <property type="entry name" value="Amidase_dom"/>
</dbReference>
<dbReference type="InterPro" id="IPR036928">
    <property type="entry name" value="AS_sf"/>
</dbReference>
<dbReference type="InterPro" id="IPR004412">
    <property type="entry name" value="GatA"/>
</dbReference>
<dbReference type="NCBIfam" id="TIGR00132">
    <property type="entry name" value="gatA"/>
    <property type="match status" value="1"/>
</dbReference>
<dbReference type="PANTHER" id="PTHR11895:SF151">
    <property type="entry name" value="GLUTAMYL-TRNA(GLN) AMIDOTRANSFERASE SUBUNIT A"/>
    <property type="match status" value="1"/>
</dbReference>
<dbReference type="PANTHER" id="PTHR11895">
    <property type="entry name" value="TRANSAMIDASE"/>
    <property type="match status" value="1"/>
</dbReference>
<dbReference type="Pfam" id="PF01425">
    <property type="entry name" value="Amidase"/>
    <property type="match status" value="1"/>
</dbReference>
<dbReference type="SUPFAM" id="SSF75304">
    <property type="entry name" value="Amidase signature (AS) enzymes"/>
    <property type="match status" value="1"/>
</dbReference>
<dbReference type="PROSITE" id="PS00571">
    <property type="entry name" value="AMIDASES"/>
    <property type="match status" value="1"/>
</dbReference>
<name>GATA_LACLA</name>
<sequence>MSYNNKSIKELHELLVNKEISALELTKATLSDISAREPQIDAFLKITEEKALQDAAAIDARGINPDVVTDGISIAVKDNIVTEGIETTAASKILGGWIPPYNATVANKLSESGLITIGKLNMDEFAMGGSGENSSVKPTKNAWDQTKVPGGSSSGSAASVASGQVRLSLGSDTGGSIRQPAAFNGIVGLKPTYGRVSRFGLIAFASSLDQIGPLAPTVEENAQLLNVISGFDKNDSTSSNVAVPDFTSKIGQDIKGMKIALPKEYFGEGIDEKVKEQILAAAKHLEKLGAIVEEVSLPHSKYGVAVYYIIASSEASSNLQRFDGIRYGYRAQDIKNLEDLYVKSRSEGFGPEVQRRIMLGTFSLSAGSYDKHFKKAGQVRTLIINDFAKVFEKYDLILGPTTPTPAWDLGARVDDPLSMYLADLLTIPVNLAGLPGISIPAGFADGLPVGMQLIGKRYDEETIYKVAAAFEATTDFHKKQPIIFGK</sequence>
<keyword id="KW-0067">ATP-binding</keyword>
<keyword id="KW-0436">Ligase</keyword>
<keyword id="KW-0547">Nucleotide-binding</keyword>
<keyword id="KW-0648">Protein biosynthesis</keyword>
<keyword id="KW-1185">Reference proteome</keyword>